<proteinExistence type="evidence at protein level"/>
<feature type="chain" id="PRO_0000126466" description="Small ribosomal subunit protein uS8">
    <location>
        <begin position="1"/>
        <end position="130"/>
    </location>
</feature>
<keyword id="KW-0002">3D-structure</keyword>
<keyword id="KW-1185">Reference proteome</keyword>
<keyword id="KW-0687">Ribonucleoprotein</keyword>
<keyword id="KW-0689">Ribosomal protein</keyword>
<keyword id="KW-0694">RNA-binding</keyword>
<keyword id="KW-0699">rRNA-binding</keyword>
<dbReference type="EMBL" id="AE004091">
    <property type="protein sequence ID" value="AAG07637.1"/>
    <property type="molecule type" value="Genomic_DNA"/>
</dbReference>
<dbReference type="PIR" id="G83114">
    <property type="entry name" value="G83114"/>
</dbReference>
<dbReference type="RefSeq" id="NP_252939.1">
    <property type="nucleotide sequence ID" value="NC_002516.2"/>
</dbReference>
<dbReference type="RefSeq" id="WP_003093700.1">
    <property type="nucleotide sequence ID" value="NZ_QZGE01000028.1"/>
</dbReference>
<dbReference type="PDB" id="7UNR">
    <property type="method" value="EM"/>
    <property type="resolution" value="2.90 A"/>
    <property type="chains" value="h=1-130"/>
</dbReference>
<dbReference type="PDB" id="7UNU">
    <property type="method" value="EM"/>
    <property type="resolution" value="2.90 A"/>
    <property type="chains" value="h=1-130"/>
</dbReference>
<dbReference type="PDB" id="7UNV">
    <property type="method" value="EM"/>
    <property type="resolution" value="2.70 A"/>
    <property type="chains" value="h=1-130"/>
</dbReference>
<dbReference type="PDB" id="7UNW">
    <property type="method" value="EM"/>
    <property type="resolution" value="2.60 A"/>
    <property type="chains" value="h=1-130"/>
</dbReference>
<dbReference type="PDB" id="8CD1">
    <property type="method" value="EM"/>
    <property type="resolution" value="3.00 A"/>
    <property type="chains" value="h=1-130"/>
</dbReference>
<dbReference type="PDB" id="8RWG">
    <property type="method" value="EM"/>
    <property type="resolution" value="2.46 A"/>
    <property type="chains" value="g=1-130"/>
</dbReference>
<dbReference type="PDBsum" id="7UNR"/>
<dbReference type="PDBsum" id="7UNU"/>
<dbReference type="PDBsum" id="7UNV"/>
<dbReference type="PDBsum" id="7UNW"/>
<dbReference type="PDBsum" id="8CD1"/>
<dbReference type="PDBsum" id="8RWG"/>
<dbReference type="EMDB" id="EMD-16566"/>
<dbReference type="EMDB" id="EMD-19547"/>
<dbReference type="EMDB" id="EMD-26630"/>
<dbReference type="EMDB" id="EMD-26633"/>
<dbReference type="EMDB" id="EMD-26634"/>
<dbReference type="EMDB" id="EMD-26635"/>
<dbReference type="SMR" id="Q9HWE9"/>
<dbReference type="FunCoup" id="Q9HWE9">
    <property type="interactions" value="721"/>
</dbReference>
<dbReference type="STRING" id="208964.PA4249"/>
<dbReference type="PaxDb" id="208964-PA4249"/>
<dbReference type="DNASU" id="881738"/>
<dbReference type="GeneID" id="77219212"/>
<dbReference type="GeneID" id="881738"/>
<dbReference type="KEGG" id="pae:PA4249"/>
<dbReference type="PATRIC" id="fig|208964.12.peg.4450"/>
<dbReference type="PseudoCAP" id="PA4249"/>
<dbReference type="HOGENOM" id="CLU_098428_0_0_6"/>
<dbReference type="InParanoid" id="Q9HWE9"/>
<dbReference type="OrthoDB" id="9802617at2"/>
<dbReference type="PhylomeDB" id="Q9HWE9"/>
<dbReference type="BioCyc" id="PAER208964:G1FZ6-4322-MONOMER"/>
<dbReference type="PRO" id="PR:Q9HWE9"/>
<dbReference type="Proteomes" id="UP000002438">
    <property type="component" value="Chromosome"/>
</dbReference>
<dbReference type="GO" id="GO:0022627">
    <property type="term" value="C:cytosolic small ribosomal subunit"/>
    <property type="evidence" value="ECO:0000318"/>
    <property type="project" value="GO_Central"/>
</dbReference>
<dbReference type="GO" id="GO:0019843">
    <property type="term" value="F:rRNA binding"/>
    <property type="evidence" value="ECO:0007669"/>
    <property type="project" value="UniProtKB-UniRule"/>
</dbReference>
<dbReference type="GO" id="GO:0003735">
    <property type="term" value="F:structural constituent of ribosome"/>
    <property type="evidence" value="ECO:0000318"/>
    <property type="project" value="GO_Central"/>
</dbReference>
<dbReference type="GO" id="GO:0006412">
    <property type="term" value="P:translation"/>
    <property type="evidence" value="ECO:0007669"/>
    <property type="project" value="UniProtKB-UniRule"/>
</dbReference>
<dbReference type="FunFam" id="3.30.1370.30:FF:000003">
    <property type="entry name" value="30S ribosomal protein S8"/>
    <property type="match status" value="1"/>
</dbReference>
<dbReference type="FunFam" id="3.30.1490.10:FF:000001">
    <property type="entry name" value="30S ribosomal protein S8"/>
    <property type="match status" value="1"/>
</dbReference>
<dbReference type="Gene3D" id="3.30.1370.30">
    <property type="match status" value="1"/>
</dbReference>
<dbReference type="Gene3D" id="3.30.1490.10">
    <property type="match status" value="1"/>
</dbReference>
<dbReference type="HAMAP" id="MF_01302_B">
    <property type="entry name" value="Ribosomal_uS8_B"/>
    <property type="match status" value="1"/>
</dbReference>
<dbReference type="InterPro" id="IPR000630">
    <property type="entry name" value="Ribosomal_uS8"/>
</dbReference>
<dbReference type="InterPro" id="IPR047863">
    <property type="entry name" value="Ribosomal_uS8_CS"/>
</dbReference>
<dbReference type="InterPro" id="IPR035987">
    <property type="entry name" value="Ribosomal_uS8_sf"/>
</dbReference>
<dbReference type="NCBIfam" id="NF001109">
    <property type="entry name" value="PRK00136.1"/>
    <property type="match status" value="1"/>
</dbReference>
<dbReference type="PANTHER" id="PTHR11758">
    <property type="entry name" value="40S RIBOSOMAL PROTEIN S15A"/>
    <property type="match status" value="1"/>
</dbReference>
<dbReference type="Pfam" id="PF00410">
    <property type="entry name" value="Ribosomal_S8"/>
    <property type="match status" value="1"/>
</dbReference>
<dbReference type="SUPFAM" id="SSF56047">
    <property type="entry name" value="Ribosomal protein S8"/>
    <property type="match status" value="1"/>
</dbReference>
<dbReference type="PROSITE" id="PS00053">
    <property type="entry name" value="RIBOSOMAL_S8"/>
    <property type="match status" value="1"/>
</dbReference>
<name>RS8_PSEAE</name>
<comment type="function">
    <text evidence="1">One of the primary rRNA binding proteins, it binds directly to 16S rRNA central domain where it helps coordinate assembly of the platform of the 30S subunit.</text>
</comment>
<comment type="subunit">
    <text evidence="1">Part of the 30S ribosomal subunit. Contacts proteins S5 and S12.</text>
</comment>
<comment type="similarity">
    <text evidence="1">Belongs to the universal ribosomal protein uS8 family.</text>
</comment>
<accession>Q9HWE9</accession>
<evidence type="ECO:0000255" key="1">
    <source>
        <dbReference type="HAMAP-Rule" id="MF_01302"/>
    </source>
</evidence>
<evidence type="ECO:0000305" key="2"/>
<reference key="1">
    <citation type="journal article" date="2000" name="Nature">
        <title>Complete genome sequence of Pseudomonas aeruginosa PAO1, an opportunistic pathogen.</title>
        <authorList>
            <person name="Stover C.K."/>
            <person name="Pham X.-Q.T."/>
            <person name="Erwin A.L."/>
            <person name="Mizoguchi S.D."/>
            <person name="Warrener P."/>
            <person name="Hickey M.J."/>
            <person name="Brinkman F.S.L."/>
            <person name="Hufnagle W.O."/>
            <person name="Kowalik D.J."/>
            <person name="Lagrou M."/>
            <person name="Garber R.L."/>
            <person name="Goltry L."/>
            <person name="Tolentino E."/>
            <person name="Westbrock-Wadman S."/>
            <person name="Yuan Y."/>
            <person name="Brody L.L."/>
            <person name="Coulter S.N."/>
            <person name="Folger K.R."/>
            <person name="Kas A."/>
            <person name="Larbig K."/>
            <person name="Lim R.M."/>
            <person name="Smith K.A."/>
            <person name="Spencer D.H."/>
            <person name="Wong G.K.-S."/>
            <person name="Wu Z."/>
            <person name="Paulsen I.T."/>
            <person name="Reizer J."/>
            <person name="Saier M.H. Jr."/>
            <person name="Hancock R.E.W."/>
            <person name="Lory S."/>
            <person name="Olson M.V."/>
        </authorList>
    </citation>
    <scope>NUCLEOTIDE SEQUENCE [LARGE SCALE GENOMIC DNA]</scope>
    <source>
        <strain>ATCC 15692 / DSM 22644 / CIP 104116 / JCM 14847 / LMG 12228 / 1C / PRS 101 / PAO1</strain>
    </source>
</reference>
<organism>
    <name type="scientific">Pseudomonas aeruginosa (strain ATCC 15692 / DSM 22644 / CIP 104116 / JCM 14847 / LMG 12228 / 1C / PRS 101 / PAO1)</name>
    <dbReference type="NCBI Taxonomy" id="208964"/>
    <lineage>
        <taxon>Bacteria</taxon>
        <taxon>Pseudomonadati</taxon>
        <taxon>Pseudomonadota</taxon>
        <taxon>Gammaproteobacteria</taxon>
        <taxon>Pseudomonadales</taxon>
        <taxon>Pseudomonadaceae</taxon>
        <taxon>Pseudomonas</taxon>
    </lineage>
</organism>
<sequence length="130" mass="14171">MSMQDPLADMLTRIRNAQMAEKTVVSMPSSKLKAAVAKVLKDEGYIADFQISSEVKPQLSIELKYFEGKPVIEEVKRISRPGLRQYKSVEQLPKVRGGLGVSIVSTNKGVMTDRAARAAGVGGEVLCTVF</sequence>
<protein>
    <recommendedName>
        <fullName evidence="1">Small ribosomal subunit protein uS8</fullName>
    </recommendedName>
    <alternativeName>
        <fullName evidence="2">30S ribosomal protein S8</fullName>
    </alternativeName>
</protein>
<gene>
    <name evidence="1" type="primary">rpsH</name>
    <name type="ordered locus">PA4249</name>
</gene>